<name>FTHS_METEA</name>
<protein>
    <recommendedName>
        <fullName>Formate--tetrahydrofolate ligase</fullName>
        <ecNumber>6.3.4.3</ecNumber>
    </recommendedName>
    <alternativeName>
        <fullName>Formyltetrahydrofolate synthetase</fullName>
        <shortName>FHS</shortName>
        <shortName>FTHFS</shortName>
    </alternativeName>
</protein>
<proteinExistence type="evidence at protein level"/>
<evidence type="ECO:0000250" key="1"/>
<evidence type="ECO:0000269" key="2">
    <source>
    </source>
</evidence>
<evidence type="ECO:0000305" key="3"/>
<sequence length="557" mass="59391">MPSDIEIARAATLKPIAQVAEKLGIPDEALHNYGKHIAKIDHDFIASLEGKPEGKLVLVTAISPTPAGEGKTTTTVGLGDALNRIGKRAVMCLREPSLGPCFGMKGGAAGGGKAQVVPMEQINLHFTGDFHAITSAHSLAAALIDNHIYWANELNIDVRRIHWRRVVDMNDRALRAINQSLGGVANGFPREDGFDITVASEVMAVFCLAKNLADLEERLGRIVIAETRDRKPVTLADVKATGAMTVLLKDALQPNLVQTLEGNPALIHGGPFANIAHGCNSVIATRTGLRLADYTVTEAGFGADLGAEKFIDIKCRQTGLKPSAVVIVATIRALKMHGGVNKKDLQAENLDALEKGFANLERHVNNVRSFGLPVVVGVNHFFQDTDAEHARLKELCRDRLQVEAITCKHWAEGGAGAEALAQAVVKLAEGEQKPLTFAYETETKITDKIKAIATKLYGAADIQIESKAATKLAGFEKDGYGGLPVCMAKTQYSFSTDPTLMGAPSGHLVSVRDVRLSAGAGFVVVICGEIMTMPGLPKVPAADTIRLDANGQIDGLF</sequence>
<accession>Q83WS0</accession>
<accession>C5AS46</accession>
<feature type="initiator methionine" description="Removed" evidence="2">
    <location>
        <position position="1"/>
    </location>
</feature>
<feature type="chain" id="PRO_0000199359" description="Formate--tetrahydrofolate ligase">
    <location>
        <begin position="2"/>
        <end position="557"/>
    </location>
</feature>
<feature type="binding site" evidence="1">
    <location>
        <begin position="65"/>
        <end position="72"/>
    </location>
    <ligand>
        <name>ATP</name>
        <dbReference type="ChEBI" id="CHEBI:30616"/>
    </ligand>
</feature>
<reference key="1">
    <citation type="journal article" date="2003" name="J. Bacteriol.">
        <title>Purification of the formate-tetrahydrofolate ligase from Methylobacterium extorquens AM1 and demonstration of its requirement for methylotrophic growth.</title>
        <authorList>
            <person name="Marx C.J."/>
            <person name="Laukel M."/>
            <person name="Vorholt J.A."/>
            <person name="Lidstrom M.E."/>
        </authorList>
    </citation>
    <scope>NUCLEOTIDE SEQUENCE [GENOMIC DNA]</scope>
    <scope>PROTEIN SEQUENCE OF 2-13</scope>
    <scope>CATALYTIC ACTIVITY</scope>
    <scope>BIOPHYSICOCHEMICAL PROPERTIES</scope>
    <scope>SUBUNIT</scope>
</reference>
<reference key="2">
    <citation type="journal article" date="2009" name="PLoS ONE">
        <title>Methylobacterium genome sequences: a reference blueprint to investigate microbial metabolism of C1 compounds from natural and industrial sources.</title>
        <authorList>
            <person name="Vuilleumier S."/>
            <person name="Chistoserdova L."/>
            <person name="Lee M.-C."/>
            <person name="Bringel F."/>
            <person name="Lajus A."/>
            <person name="Zhou Y."/>
            <person name="Gourion B."/>
            <person name="Barbe V."/>
            <person name="Chang J."/>
            <person name="Cruveiller S."/>
            <person name="Dossat C."/>
            <person name="Gillett W."/>
            <person name="Gruffaz C."/>
            <person name="Haugen E."/>
            <person name="Hourcade E."/>
            <person name="Levy R."/>
            <person name="Mangenot S."/>
            <person name="Muller E."/>
            <person name="Nadalig T."/>
            <person name="Pagni M."/>
            <person name="Penny C."/>
            <person name="Peyraud R."/>
            <person name="Robinson D.G."/>
            <person name="Roche D."/>
            <person name="Rouy Z."/>
            <person name="Saenampechek C."/>
            <person name="Salvignol G."/>
            <person name="Vallenet D."/>
            <person name="Wu Z."/>
            <person name="Marx C.J."/>
            <person name="Vorholt J.A."/>
            <person name="Olson M.V."/>
            <person name="Kaul R."/>
            <person name="Weissenbach J."/>
            <person name="Medigue C."/>
            <person name="Lidstrom M.E."/>
        </authorList>
    </citation>
    <scope>NUCLEOTIDE SEQUENCE [LARGE SCALE GENOMIC DNA]</scope>
    <source>
        <strain>ATCC 14718 / DSM 1338 / JCM 2805 / NCIMB 9133 / AM1</strain>
    </source>
</reference>
<keyword id="KW-0067">ATP-binding</keyword>
<keyword id="KW-0903">Direct protein sequencing</keyword>
<keyword id="KW-0436">Ligase</keyword>
<keyword id="KW-0547">Nucleotide-binding</keyword>
<keyword id="KW-0554">One-carbon metabolism</keyword>
<keyword id="KW-1185">Reference proteome</keyword>
<dbReference type="EC" id="6.3.4.3"/>
<dbReference type="EMBL" id="AY279316">
    <property type="protein sequence ID" value="AAP33693.1"/>
    <property type="molecule type" value="Genomic_DNA"/>
</dbReference>
<dbReference type="EMBL" id="CP001510">
    <property type="protein sequence ID" value="ACS38281.1"/>
    <property type="molecule type" value="Genomic_DNA"/>
</dbReference>
<dbReference type="RefSeq" id="WP_003606333.1">
    <property type="nucleotide sequence ID" value="NC_012808.1"/>
</dbReference>
<dbReference type="SMR" id="Q83WS0"/>
<dbReference type="STRING" id="272630.MexAM1_META1p0329"/>
<dbReference type="KEGG" id="mea:Mex_1p0329"/>
<dbReference type="eggNOG" id="COG2759">
    <property type="taxonomic scope" value="Bacteria"/>
</dbReference>
<dbReference type="HOGENOM" id="CLU_003601_3_3_5"/>
<dbReference type="OrthoDB" id="9761733at2"/>
<dbReference type="BioCyc" id="MetaCyc:MONOMER-3942"/>
<dbReference type="BRENDA" id="6.3.4.3">
    <property type="organism ID" value="3296"/>
</dbReference>
<dbReference type="SABIO-RK" id="Q83WS0"/>
<dbReference type="UniPathway" id="UPA00193"/>
<dbReference type="Proteomes" id="UP000009081">
    <property type="component" value="Chromosome"/>
</dbReference>
<dbReference type="GO" id="GO:0005524">
    <property type="term" value="F:ATP binding"/>
    <property type="evidence" value="ECO:0007669"/>
    <property type="project" value="UniProtKB-UniRule"/>
</dbReference>
<dbReference type="GO" id="GO:0004329">
    <property type="term" value="F:formate-tetrahydrofolate ligase activity"/>
    <property type="evidence" value="ECO:0007669"/>
    <property type="project" value="UniProtKB-UniRule"/>
</dbReference>
<dbReference type="GO" id="GO:0035999">
    <property type="term" value="P:tetrahydrofolate interconversion"/>
    <property type="evidence" value="ECO:0007669"/>
    <property type="project" value="UniProtKB-UniRule"/>
</dbReference>
<dbReference type="CDD" id="cd00477">
    <property type="entry name" value="FTHFS"/>
    <property type="match status" value="1"/>
</dbReference>
<dbReference type="FunFam" id="3.30.1510.10:FF:000001">
    <property type="entry name" value="Formate--tetrahydrofolate ligase"/>
    <property type="match status" value="1"/>
</dbReference>
<dbReference type="FunFam" id="3.10.410.10:FF:000001">
    <property type="entry name" value="Putative formate--tetrahydrofolate ligase"/>
    <property type="match status" value="1"/>
</dbReference>
<dbReference type="Gene3D" id="3.30.1510.10">
    <property type="entry name" value="Domain 2, N(10)-formyltetrahydrofolate synthetase"/>
    <property type="match status" value="1"/>
</dbReference>
<dbReference type="Gene3D" id="3.10.410.10">
    <property type="entry name" value="Formyltetrahydrofolate synthetase, domain 3"/>
    <property type="match status" value="1"/>
</dbReference>
<dbReference type="Gene3D" id="3.40.50.300">
    <property type="entry name" value="P-loop containing nucleotide triphosphate hydrolases"/>
    <property type="match status" value="1"/>
</dbReference>
<dbReference type="HAMAP" id="MF_01543">
    <property type="entry name" value="FTHFS"/>
    <property type="match status" value="1"/>
</dbReference>
<dbReference type="InterPro" id="IPR000559">
    <property type="entry name" value="Formate_THF_ligase"/>
</dbReference>
<dbReference type="InterPro" id="IPR020628">
    <property type="entry name" value="Formate_THF_ligase_CS"/>
</dbReference>
<dbReference type="InterPro" id="IPR027417">
    <property type="entry name" value="P-loop_NTPase"/>
</dbReference>
<dbReference type="NCBIfam" id="NF010030">
    <property type="entry name" value="PRK13505.1"/>
    <property type="match status" value="1"/>
</dbReference>
<dbReference type="Pfam" id="PF01268">
    <property type="entry name" value="FTHFS"/>
    <property type="match status" value="1"/>
</dbReference>
<dbReference type="SUPFAM" id="SSF52540">
    <property type="entry name" value="P-loop containing nucleoside triphosphate hydrolases"/>
    <property type="match status" value="1"/>
</dbReference>
<dbReference type="PROSITE" id="PS00721">
    <property type="entry name" value="FTHFS_1"/>
    <property type="match status" value="1"/>
</dbReference>
<dbReference type="PROSITE" id="PS00722">
    <property type="entry name" value="FTHFS_2"/>
    <property type="match status" value="1"/>
</dbReference>
<organism>
    <name type="scientific">Methylorubrum extorquens (strain ATCC 14718 / DSM 1338 / JCM 2805 / NCIMB 9133 / AM1)</name>
    <name type="common">Methylobacterium extorquens</name>
    <dbReference type="NCBI Taxonomy" id="272630"/>
    <lineage>
        <taxon>Bacteria</taxon>
        <taxon>Pseudomonadati</taxon>
        <taxon>Pseudomonadota</taxon>
        <taxon>Alphaproteobacteria</taxon>
        <taxon>Hyphomicrobiales</taxon>
        <taxon>Methylobacteriaceae</taxon>
        <taxon>Methylorubrum</taxon>
    </lineage>
</organism>
<comment type="catalytic activity">
    <reaction evidence="2">
        <text>(6S)-5,6,7,8-tetrahydrofolate + formate + ATP = (6R)-10-formyltetrahydrofolate + ADP + phosphate</text>
        <dbReference type="Rhea" id="RHEA:20221"/>
        <dbReference type="ChEBI" id="CHEBI:15740"/>
        <dbReference type="ChEBI" id="CHEBI:30616"/>
        <dbReference type="ChEBI" id="CHEBI:43474"/>
        <dbReference type="ChEBI" id="CHEBI:57453"/>
        <dbReference type="ChEBI" id="CHEBI:195366"/>
        <dbReference type="ChEBI" id="CHEBI:456216"/>
        <dbReference type="EC" id="6.3.4.3"/>
    </reaction>
</comment>
<comment type="biophysicochemical properties">
    <kinetics>
        <KM evidence="2">22 mM for formate</KM>
        <KM evidence="2">0.8 mM for tetrahydrofolate</KM>
        <KM evidence="2">21 uM for ATP</KM>
    </kinetics>
</comment>
<comment type="pathway">
    <text>One-carbon metabolism; tetrahydrofolate interconversion.</text>
</comment>
<comment type="subunit">
    <text evidence="2">Homotetramer.</text>
</comment>
<comment type="similarity">
    <text evidence="3">Belongs to the formate--tetrahydrofolate ligase family.</text>
</comment>
<gene>
    <name type="primary">fhs</name>
    <name type="synonym">ftfL</name>
    <name type="ordered locus">MexAM1_META1p0329</name>
</gene>